<gene>
    <name type="primary">EMB2758</name>
    <name type="synonym">PCMP-H20</name>
    <name type="ordered locus">At4g33990</name>
    <name type="ORF">F17I5.180</name>
</gene>
<dbReference type="EMBL" id="AL031032">
    <property type="protein sequence ID" value="CAA19881.1"/>
    <property type="status" value="ALT_SEQ"/>
    <property type="molecule type" value="Genomic_DNA"/>
</dbReference>
<dbReference type="EMBL" id="AL161584">
    <property type="protein sequence ID" value="CAB80116.1"/>
    <property type="status" value="ALT_SEQ"/>
    <property type="molecule type" value="Genomic_DNA"/>
</dbReference>
<dbReference type="EMBL" id="CP002687">
    <property type="protein sequence ID" value="AEE86306.1"/>
    <property type="molecule type" value="Genomic_DNA"/>
</dbReference>
<dbReference type="PIR" id="T05227">
    <property type="entry name" value="T05227"/>
</dbReference>
<dbReference type="RefSeq" id="NP_567948.1">
    <property type="nucleotide sequence ID" value="NM_119561.2"/>
</dbReference>
<dbReference type="SMR" id="O81767"/>
<dbReference type="FunCoup" id="O81767">
    <property type="interactions" value="209"/>
</dbReference>
<dbReference type="PaxDb" id="3702-AT4G33990.1"/>
<dbReference type="ProteomicsDB" id="248996"/>
<dbReference type="EnsemblPlants" id="AT4G33990.1">
    <property type="protein sequence ID" value="AT4G33990.1"/>
    <property type="gene ID" value="AT4G33990"/>
</dbReference>
<dbReference type="GeneID" id="829546"/>
<dbReference type="Gramene" id="AT4G33990.1">
    <property type="protein sequence ID" value="AT4G33990.1"/>
    <property type="gene ID" value="AT4G33990"/>
</dbReference>
<dbReference type="KEGG" id="ath:AT4G33990"/>
<dbReference type="Araport" id="AT4G33990"/>
<dbReference type="TAIR" id="AT4G33990">
    <property type="gene designation" value="EMB2758"/>
</dbReference>
<dbReference type="eggNOG" id="KOG4197">
    <property type="taxonomic scope" value="Eukaryota"/>
</dbReference>
<dbReference type="HOGENOM" id="CLU_002706_15_1_1"/>
<dbReference type="InParanoid" id="O81767"/>
<dbReference type="PhylomeDB" id="O81767"/>
<dbReference type="PRO" id="PR:O81767"/>
<dbReference type="Proteomes" id="UP000006548">
    <property type="component" value="Chromosome 4"/>
</dbReference>
<dbReference type="ExpressionAtlas" id="O81767">
    <property type="expression patterns" value="baseline and differential"/>
</dbReference>
<dbReference type="GO" id="GO:0003723">
    <property type="term" value="F:RNA binding"/>
    <property type="evidence" value="ECO:0007669"/>
    <property type="project" value="InterPro"/>
</dbReference>
<dbReference type="GO" id="GO:0008270">
    <property type="term" value="F:zinc ion binding"/>
    <property type="evidence" value="ECO:0007669"/>
    <property type="project" value="InterPro"/>
</dbReference>
<dbReference type="GO" id="GO:0009451">
    <property type="term" value="P:RNA modification"/>
    <property type="evidence" value="ECO:0007669"/>
    <property type="project" value="InterPro"/>
</dbReference>
<dbReference type="FunFam" id="1.25.40.10:FF:000669">
    <property type="entry name" value="Pentatricopeptide repeat-containing protein At4g33990"/>
    <property type="match status" value="1"/>
</dbReference>
<dbReference type="FunFam" id="1.25.40.10:FF:000858">
    <property type="entry name" value="Pentatricopeptide repeat-containing protein At4g33990"/>
    <property type="match status" value="1"/>
</dbReference>
<dbReference type="FunFam" id="1.25.40.10:FF:001088">
    <property type="entry name" value="Pentatricopeptide repeat-containing protein At4g33990"/>
    <property type="match status" value="1"/>
</dbReference>
<dbReference type="FunFam" id="1.25.40.10:FF:000073">
    <property type="entry name" value="Pentatricopeptide repeat-containing protein chloroplastic"/>
    <property type="match status" value="1"/>
</dbReference>
<dbReference type="Gene3D" id="1.25.40.10">
    <property type="entry name" value="Tetratricopeptide repeat domain"/>
    <property type="match status" value="6"/>
</dbReference>
<dbReference type="InterPro" id="IPR032867">
    <property type="entry name" value="DYW_dom"/>
</dbReference>
<dbReference type="InterPro" id="IPR046848">
    <property type="entry name" value="E_motif"/>
</dbReference>
<dbReference type="InterPro" id="IPR002885">
    <property type="entry name" value="Pentatricopeptide_rpt"/>
</dbReference>
<dbReference type="InterPro" id="IPR046960">
    <property type="entry name" value="PPR_At4g14850-like_plant"/>
</dbReference>
<dbReference type="InterPro" id="IPR011990">
    <property type="entry name" value="TPR-like_helical_dom_sf"/>
</dbReference>
<dbReference type="NCBIfam" id="TIGR00756">
    <property type="entry name" value="PPR"/>
    <property type="match status" value="5"/>
</dbReference>
<dbReference type="PANTHER" id="PTHR47926:SF486">
    <property type="entry name" value="(WILD MALAYSIAN BANANA) HYPOTHETICAL PROTEIN"/>
    <property type="match status" value="1"/>
</dbReference>
<dbReference type="PANTHER" id="PTHR47926">
    <property type="entry name" value="PENTATRICOPEPTIDE REPEAT-CONTAINING PROTEIN"/>
    <property type="match status" value="1"/>
</dbReference>
<dbReference type="Pfam" id="PF14432">
    <property type="entry name" value="DYW_deaminase"/>
    <property type="match status" value="1"/>
</dbReference>
<dbReference type="Pfam" id="PF20431">
    <property type="entry name" value="E_motif"/>
    <property type="match status" value="1"/>
</dbReference>
<dbReference type="Pfam" id="PF01535">
    <property type="entry name" value="PPR"/>
    <property type="match status" value="7"/>
</dbReference>
<dbReference type="Pfam" id="PF13041">
    <property type="entry name" value="PPR_2"/>
    <property type="match status" value="1"/>
</dbReference>
<dbReference type="PROSITE" id="PS51375">
    <property type="entry name" value="PPR"/>
    <property type="match status" value="13"/>
</dbReference>
<organism>
    <name type="scientific">Arabidopsis thaliana</name>
    <name type="common">Mouse-ear cress</name>
    <dbReference type="NCBI Taxonomy" id="3702"/>
    <lineage>
        <taxon>Eukaryota</taxon>
        <taxon>Viridiplantae</taxon>
        <taxon>Streptophyta</taxon>
        <taxon>Embryophyta</taxon>
        <taxon>Tracheophyta</taxon>
        <taxon>Spermatophyta</taxon>
        <taxon>Magnoliopsida</taxon>
        <taxon>eudicotyledons</taxon>
        <taxon>Gunneridae</taxon>
        <taxon>Pentapetalae</taxon>
        <taxon>rosids</taxon>
        <taxon>malvids</taxon>
        <taxon>Brassicales</taxon>
        <taxon>Brassicaceae</taxon>
        <taxon>Camelineae</taxon>
        <taxon>Arabidopsis</taxon>
    </lineage>
</organism>
<accession>O81767</accession>
<keyword id="KW-1185">Reference proteome</keyword>
<keyword id="KW-0677">Repeat</keyword>
<sequence length="823" mass="92414">MKFGTFSLPRQIPTCKGGRFTRVLQSIGSVIREFSASANALQDCWKNGNESKEIDDVHTLFRYCTNLQSAKCLHARLVVSKQIQNVCISAKLVNLYCYLGNVALARHTFDHIQNRDVYAWNLMISGYGRAGNSSEVIRCFSLFMLSSGLTPDYRTFPSVLKACRTVIDGNKIHCLALKFGFMWDVYVAASLIHLYSRYKAVGNARILFDEMPVRDMGSWNAMISGYCQSGNAKEALTLSNGLRAMDSVTVVSLLSACTEAGDFNRGVTIHSYSIKHGLESELFVSNKLIDLYAEFGRLRDCQKVFDRMYVRDLISWNSIIKAYELNEQPLRAISLFQEMRLSRIQPDCLTLISLASILSQLGDIRACRSVQGFTLRKGWFLEDITIGNAVVVMYAKLGLVDSARAVFNWLPNTDVISWNTIISGYAQNGFASEAIEMYNIMEEEGEIAANQGTWVSVLPACSQAGALRQGMKLHGRLLKNGLYLDVFVVTSLADMYGKCGRLEDALSLFYQIPRVNSVPWNTLIACHGFHGHGEKAVMLFKEMLDEGVKPDHITFVTLLSACSHSGLVDEGQWCFEMMQTDYGITPSLKHYGCMVDMYGRAGQLETALKFIKSMSLQPDASIWGALLSACRVHGNVDLGKIASEHLFEVEPEHVGYHVLLSNMYASAGKWEGVDEIRSIAHGKGLRKTPGWSSMEVDNKVEVFYTGNQTHPMYEEMYRELTALQAKLKMIGYVPDHRFVLQDVEDDEKEHILMSHSERLAIAFALIATPAKTTIRIFKNLRVCGDCHSVTKFISKITEREIIVRDSNRFHHFKNGVCSCGDYW</sequence>
<proteinExistence type="inferred from homology"/>
<comment type="similarity">
    <text evidence="1">Belongs to the PPR family. PCMP-H subfamily.</text>
</comment>
<comment type="sequence caution" evidence="1">
    <conflict type="erroneous gene model prediction">
        <sequence resource="EMBL-CDS" id="CAA19881"/>
    </conflict>
</comment>
<comment type="sequence caution" evidence="1">
    <conflict type="erroneous gene model prediction">
        <sequence resource="EMBL-CDS" id="CAB80116"/>
    </conflict>
</comment>
<comment type="online information" name="Pentatricopeptide repeat proteins">
    <link uri="https://ppr.plantenergy.uwa.edu.au"/>
</comment>
<reference key="1">
    <citation type="journal article" date="1999" name="Nature">
        <title>Sequence and analysis of chromosome 4 of the plant Arabidopsis thaliana.</title>
        <authorList>
            <person name="Mayer K.F.X."/>
            <person name="Schueller C."/>
            <person name="Wambutt R."/>
            <person name="Murphy G."/>
            <person name="Volckaert G."/>
            <person name="Pohl T."/>
            <person name="Duesterhoeft A."/>
            <person name="Stiekema W."/>
            <person name="Entian K.-D."/>
            <person name="Terryn N."/>
            <person name="Harris B."/>
            <person name="Ansorge W."/>
            <person name="Brandt P."/>
            <person name="Grivell L.A."/>
            <person name="Rieger M."/>
            <person name="Weichselgartner M."/>
            <person name="de Simone V."/>
            <person name="Obermaier B."/>
            <person name="Mache R."/>
            <person name="Mueller M."/>
            <person name="Kreis M."/>
            <person name="Delseny M."/>
            <person name="Puigdomenech P."/>
            <person name="Watson M."/>
            <person name="Schmidtheini T."/>
            <person name="Reichert B."/>
            <person name="Portetelle D."/>
            <person name="Perez-Alonso M."/>
            <person name="Boutry M."/>
            <person name="Bancroft I."/>
            <person name="Vos P."/>
            <person name="Hoheisel J."/>
            <person name="Zimmermann W."/>
            <person name="Wedler H."/>
            <person name="Ridley P."/>
            <person name="Langham S.-A."/>
            <person name="McCullagh B."/>
            <person name="Bilham L."/>
            <person name="Robben J."/>
            <person name="van der Schueren J."/>
            <person name="Grymonprez B."/>
            <person name="Chuang Y.-J."/>
            <person name="Vandenbussche F."/>
            <person name="Braeken M."/>
            <person name="Weltjens I."/>
            <person name="Voet M."/>
            <person name="Bastiaens I."/>
            <person name="Aert R."/>
            <person name="Defoor E."/>
            <person name="Weitzenegger T."/>
            <person name="Bothe G."/>
            <person name="Ramsperger U."/>
            <person name="Hilbert H."/>
            <person name="Braun M."/>
            <person name="Holzer E."/>
            <person name="Brandt A."/>
            <person name="Peters S."/>
            <person name="van Staveren M."/>
            <person name="Dirkse W."/>
            <person name="Mooijman P."/>
            <person name="Klein Lankhorst R."/>
            <person name="Rose M."/>
            <person name="Hauf J."/>
            <person name="Koetter P."/>
            <person name="Berneiser S."/>
            <person name="Hempel S."/>
            <person name="Feldpausch M."/>
            <person name="Lamberth S."/>
            <person name="Van den Daele H."/>
            <person name="De Keyser A."/>
            <person name="Buysshaert C."/>
            <person name="Gielen J."/>
            <person name="Villarroel R."/>
            <person name="De Clercq R."/>
            <person name="van Montagu M."/>
            <person name="Rogers J."/>
            <person name="Cronin A."/>
            <person name="Quail M.A."/>
            <person name="Bray-Allen S."/>
            <person name="Clark L."/>
            <person name="Doggett J."/>
            <person name="Hall S."/>
            <person name="Kay M."/>
            <person name="Lennard N."/>
            <person name="McLay K."/>
            <person name="Mayes R."/>
            <person name="Pettett A."/>
            <person name="Rajandream M.A."/>
            <person name="Lyne M."/>
            <person name="Benes V."/>
            <person name="Rechmann S."/>
            <person name="Borkova D."/>
            <person name="Bloecker H."/>
            <person name="Scharfe M."/>
            <person name="Grimm M."/>
            <person name="Loehnert T.-H."/>
            <person name="Dose S."/>
            <person name="de Haan M."/>
            <person name="Maarse A.C."/>
            <person name="Schaefer M."/>
            <person name="Mueller-Auer S."/>
            <person name="Gabel C."/>
            <person name="Fuchs M."/>
            <person name="Fartmann B."/>
            <person name="Granderath K."/>
            <person name="Dauner D."/>
            <person name="Herzl A."/>
            <person name="Neumann S."/>
            <person name="Argiriou A."/>
            <person name="Vitale D."/>
            <person name="Liguori R."/>
            <person name="Piravandi E."/>
            <person name="Massenet O."/>
            <person name="Quigley F."/>
            <person name="Clabauld G."/>
            <person name="Muendlein A."/>
            <person name="Felber R."/>
            <person name="Schnabl S."/>
            <person name="Hiller R."/>
            <person name="Schmidt W."/>
            <person name="Lecharny A."/>
            <person name="Aubourg S."/>
            <person name="Chefdor F."/>
            <person name="Cooke R."/>
            <person name="Berger C."/>
            <person name="Monfort A."/>
            <person name="Casacuberta E."/>
            <person name="Gibbons T."/>
            <person name="Weber N."/>
            <person name="Vandenbol M."/>
            <person name="Bargues M."/>
            <person name="Terol J."/>
            <person name="Torres A."/>
            <person name="Perez-Perez A."/>
            <person name="Purnelle B."/>
            <person name="Bent E."/>
            <person name="Johnson S."/>
            <person name="Tacon D."/>
            <person name="Jesse T."/>
            <person name="Heijnen L."/>
            <person name="Schwarz S."/>
            <person name="Scholler P."/>
            <person name="Heber S."/>
            <person name="Francs P."/>
            <person name="Bielke C."/>
            <person name="Frishman D."/>
            <person name="Haase D."/>
            <person name="Lemcke K."/>
            <person name="Mewes H.-W."/>
            <person name="Stocker S."/>
            <person name="Zaccaria P."/>
            <person name="Bevan M."/>
            <person name="Wilson R.K."/>
            <person name="de la Bastide M."/>
            <person name="Habermann K."/>
            <person name="Parnell L."/>
            <person name="Dedhia N."/>
            <person name="Gnoj L."/>
            <person name="Schutz K."/>
            <person name="Huang E."/>
            <person name="Spiegel L."/>
            <person name="Sekhon M."/>
            <person name="Murray J."/>
            <person name="Sheet P."/>
            <person name="Cordes M."/>
            <person name="Abu-Threideh J."/>
            <person name="Stoneking T."/>
            <person name="Kalicki J."/>
            <person name="Graves T."/>
            <person name="Harmon G."/>
            <person name="Edwards J."/>
            <person name="Latreille P."/>
            <person name="Courtney L."/>
            <person name="Cloud J."/>
            <person name="Abbott A."/>
            <person name="Scott K."/>
            <person name="Johnson D."/>
            <person name="Minx P."/>
            <person name="Bentley D."/>
            <person name="Fulton B."/>
            <person name="Miller N."/>
            <person name="Greco T."/>
            <person name="Kemp K."/>
            <person name="Kramer J."/>
            <person name="Fulton L."/>
            <person name="Mardis E."/>
            <person name="Dante M."/>
            <person name="Pepin K."/>
            <person name="Hillier L.W."/>
            <person name="Nelson J."/>
            <person name="Spieth J."/>
            <person name="Ryan E."/>
            <person name="Andrews S."/>
            <person name="Geisel C."/>
            <person name="Layman D."/>
            <person name="Du H."/>
            <person name="Ali J."/>
            <person name="Berghoff A."/>
            <person name="Jones K."/>
            <person name="Drone K."/>
            <person name="Cotton M."/>
            <person name="Joshu C."/>
            <person name="Antonoiu B."/>
            <person name="Zidanic M."/>
            <person name="Strong C."/>
            <person name="Sun H."/>
            <person name="Lamar B."/>
            <person name="Yordan C."/>
            <person name="Ma P."/>
            <person name="Zhong J."/>
            <person name="Preston R."/>
            <person name="Vil D."/>
            <person name="Shekher M."/>
            <person name="Matero A."/>
            <person name="Shah R."/>
            <person name="Swaby I.K."/>
            <person name="O'Shaughnessy A."/>
            <person name="Rodriguez M."/>
            <person name="Hoffman J."/>
            <person name="Till S."/>
            <person name="Granat S."/>
            <person name="Shohdy N."/>
            <person name="Hasegawa A."/>
            <person name="Hameed A."/>
            <person name="Lodhi M."/>
            <person name="Johnson A."/>
            <person name="Chen E."/>
            <person name="Marra M.A."/>
            <person name="Martienssen R."/>
            <person name="McCombie W.R."/>
        </authorList>
    </citation>
    <scope>NUCLEOTIDE SEQUENCE [LARGE SCALE GENOMIC DNA]</scope>
    <source>
        <strain>cv. Columbia</strain>
    </source>
</reference>
<reference key="2">
    <citation type="journal article" date="2017" name="Plant J.">
        <title>Araport11: a complete reannotation of the Arabidopsis thaliana reference genome.</title>
        <authorList>
            <person name="Cheng C.Y."/>
            <person name="Krishnakumar V."/>
            <person name="Chan A.P."/>
            <person name="Thibaud-Nissen F."/>
            <person name="Schobel S."/>
            <person name="Town C.D."/>
        </authorList>
    </citation>
    <scope>GENOME REANNOTATION</scope>
    <source>
        <strain>cv. Columbia</strain>
    </source>
</reference>
<reference key="3">
    <citation type="journal article" date="2000" name="Plant Mol. Biol.">
        <title>In Arabidopsis thaliana, 1% of the genome codes for a novel protein family unique to plants.</title>
        <authorList>
            <person name="Aubourg S."/>
            <person name="Boudet N."/>
            <person name="Kreis M."/>
            <person name="Lecharny A."/>
        </authorList>
    </citation>
    <scope>GENE FAMILY</scope>
</reference>
<reference key="4">
    <citation type="journal article" date="2004" name="Plant Cell">
        <title>Genome-wide analysis of Arabidopsis pentatricopeptide repeat proteins reveals their essential role in organelle biogenesis.</title>
        <authorList>
            <person name="Lurin C."/>
            <person name="Andres C."/>
            <person name="Aubourg S."/>
            <person name="Bellaoui M."/>
            <person name="Bitton F."/>
            <person name="Bruyere C."/>
            <person name="Caboche M."/>
            <person name="Debast C."/>
            <person name="Gualberto J."/>
            <person name="Hoffmann B."/>
            <person name="Lecharny A."/>
            <person name="Le Ret M."/>
            <person name="Martin-Magniette M.-L."/>
            <person name="Mireau H."/>
            <person name="Peeters N."/>
            <person name="Renou J.-P."/>
            <person name="Szurek B."/>
            <person name="Taconnat L."/>
            <person name="Small I."/>
        </authorList>
    </citation>
    <scope>GENE FAMILY</scope>
</reference>
<feature type="chain" id="PRO_0000363465" description="Pentatricopeptide repeat-containing protein At4g33990">
    <location>
        <begin position="1"/>
        <end position="823"/>
    </location>
</feature>
<feature type="repeat" description="PPR 1">
    <location>
        <begin position="85"/>
        <end position="115"/>
    </location>
</feature>
<feature type="repeat" description="PPR 2">
    <location>
        <begin position="116"/>
        <end position="151"/>
    </location>
</feature>
<feature type="repeat" description="PPR 3">
    <location>
        <begin position="152"/>
        <end position="183"/>
    </location>
</feature>
<feature type="repeat" description="PPR 4">
    <location>
        <begin position="184"/>
        <end position="214"/>
    </location>
</feature>
<feature type="repeat" description="PPR 5">
    <location>
        <begin position="215"/>
        <end position="249"/>
    </location>
</feature>
<feature type="repeat" description="PPR 6">
    <location>
        <begin position="252"/>
        <end position="280"/>
    </location>
</feature>
<feature type="repeat" description="PPR 7">
    <location>
        <begin position="281"/>
        <end position="311"/>
    </location>
</feature>
<feature type="repeat" description="PPR 8">
    <location>
        <begin position="312"/>
        <end position="346"/>
    </location>
</feature>
<feature type="repeat" description="PPR 9">
    <location>
        <begin position="347"/>
        <end position="381"/>
    </location>
</feature>
<feature type="repeat" description="PPR 10">
    <location>
        <begin position="383"/>
        <end position="413"/>
    </location>
</feature>
<feature type="repeat" description="PPR 11">
    <location>
        <begin position="414"/>
        <end position="448"/>
    </location>
</feature>
<feature type="repeat" description="PPR 12">
    <location>
        <begin position="450"/>
        <end position="484"/>
    </location>
</feature>
<feature type="repeat" description="PPR 13">
    <location>
        <begin position="485"/>
        <end position="515"/>
    </location>
</feature>
<feature type="repeat" description="PPR 14">
    <location>
        <begin position="516"/>
        <end position="550"/>
    </location>
</feature>
<feature type="repeat" description="PPR 15">
    <location>
        <begin position="551"/>
        <end position="581"/>
    </location>
</feature>
<feature type="repeat" description="PPR 16">
    <location>
        <begin position="587"/>
        <end position="617"/>
    </location>
</feature>
<feature type="region of interest" description="Type E motif">
    <location>
        <begin position="622"/>
        <end position="697"/>
    </location>
</feature>
<feature type="region of interest" description="Type E(+) motif">
    <location>
        <begin position="698"/>
        <end position="728"/>
    </location>
</feature>
<feature type="region of interest" description="Type DYW motif">
    <location>
        <begin position="729"/>
        <end position="823"/>
    </location>
</feature>
<name>PP348_ARATH</name>
<protein>
    <recommendedName>
        <fullName>Pentatricopeptide repeat-containing protein At4g33990</fullName>
    </recommendedName>
    <alternativeName>
        <fullName>Protein EMBRYO DEFECTIVE 2758</fullName>
    </alternativeName>
</protein>
<evidence type="ECO:0000305" key="1"/>